<dbReference type="EMBL" id="X97121">
    <property type="protein sequence ID" value="CAA65787.1"/>
    <property type="molecule type" value="mRNA"/>
</dbReference>
<dbReference type="PIR" id="S68822">
    <property type="entry name" value="S68822"/>
</dbReference>
<dbReference type="RefSeq" id="NP_073186.1">
    <property type="nucleotide sequence ID" value="NM_022695.2"/>
</dbReference>
<dbReference type="SMR" id="Q63384"/>
<dbReference type="FunCoup" id="Q63384">
    <property type="interactions" value="85"/>
</dbReference>
<dbReference type="STRING" id="10116.ENSRNOP00000067549"/>
<dbReference type="BindingDB" id="Q63384"/>
<dbReference type="ChEMBL" id="CHEMBL5106"/>
<dbReference type="DrugCentral" id="Q63384"/>
<dbReference type="GuidetoPHARMACOLOGY" id="310"/>
<dbReference type="iPTMnet" id="Q63384"/>
<dbReference type="PhosphoSitePlus" id="Q63384"/>
<dbReference type="PaxDb" id="10116-ENSRNOP00000067549"/>
<dbReference type="GeneID" id="64636"/>
<dbReference type="KEGG" id="rno:64636"/>
<dbReference type="AGR" id="RGD:70962"/>
<dbReference type="CTD" id="23620"/>
<dbReference type="RGD" id="70962">
    <property type="gene designation" value="Ntsr2"/>
</dbReference>
<dbReference type="eggNOG" id="KOG3656">
    <property type="taxonomic scope" value="Eukaryota"/>
</dbReference>
<dbReference type="InParanoid" id="Q63384"/>
<dbReference type="OrthoDB" id="9835116at2759"/>
<dbReference type="PhylomeDB" id="Q63384"/>
<dbReference type="Reactome" id="R-RNO-375276">
    <property type="pathway name" value="Peptide ligand-binding receptors"/>
</dbReference>
<dbReference type="Reactome" id="R-RNO-416476">
    <property type="pathway name" value="G alpha (q) signalling events"/>
</dbReference>
<dbReference type="PRO" id="PR:Q63384"/>
<dbReference type="Proteomes" id="UP000002494">
    <property type="component" value="Unplaced"/>
</dbReference>
<dbReference type="GO" id="GO:0009986">
    <property type="term" value="C:cell surface"/>
    <property type="evidence" value="ECO:0000314"/>
    <property type="project" value="RGD"/>
</dbReference>
<dbReference type="GO" id="GO:0043198">
    <property type="term" value="C:dendritic shaft"/>
    <property type="evidence" value="ECO:0000314"/>
    <property type="project" value="RGD"/>
</dbReference>
<dbReference type="GO" id="GO:0016020">
    <property type="term" value="C:membrane"/>
    <property type="evidence" value="ECO:0000266"/>
    <property type="project" value="RGD"/>
</dbReference>
<dbReference type="GO" id="GO:0043204">
    <property type="term" value="C:perikaryon"/>
    <property type="evidence" value="ECO:0000314"/>
    <property type="project" value="RGD"/>
</dbReference>
<dbReference type="GO" id="GO:0005886">
    <property type="term" value="C:plasma membrane"/>
    <property type="evidence" value="ECO:0000318"/>
    <property type="project" value="GO_Central"/>
</dbReference>
<dbReference type="GO" id="GO:0005802">
    <property type="term" value="C:trans-Golgi network"/>
    <property type="evidence" value="ECO:0000314"/>
    <property type="project" value="RGD"/>
</dbReference>
<dbReference type="GO" id="GO:0016492">
    <property type="term" value="F:G protein-coupled neurotensin receptor activity"/>
    <property type="evidence" value="ECO:0000266"/>
    <property type="project" value="RGD"/>
</dbReference>
<dbReference type="GO" id="GO:0042802">
    <property type="term" value="F:identical protein binding"/>
    <property type="evidence" value="ECO:0000353"/>
    <property type="project" value="RGD"/>
</dbReference>
<dbReference type="GO" id="GO:0044877">
    <property type="term" value="F:protein-containing complex binding"/>
    <property type="evidence" value="ECO:0000353"/>
    <property type="project" value="RGD"/>
</dbReference>
<dbReference type="GO" id="GO:0035640">
    <property type="term" value="P:exploration behavior"/>
    <property type="evidence" value="ECO:0000314"/>
    <property type="project" value="RGD"/>
</dbReference>
<dbReference type="GO" id="GO:0007218">
    <property type="term" value="P:neuropeptide signaling pathway"/>
    <property type="evidence" value="ECO:0000318"/>
    <property type="project" value="GO_Central"/>
</dbReference>
<dbReference type="GO" id="GO:0007200">
    <property type="term" value="P:phospholipase C-activating G protein-coupled receptor signaling pathway"/>
    <property type="evidence" value="ECO:0000266"/>
    <property type="project" value="RGD"/>
</dbReference>
<dbReference type="GO" id="GO:0070374">
    <property type="term" value="P:positive regulation of ERK1 and ERK2 cascade"/>
    <property type="evidence" value="ECO:0000314"/>
    <property type="project" value="RGD"/>
</dbReference>
<dbReference type="GO" id="GO:0043410">
    <property type="term" value="P:positive regulation of MAPK cascade"/>
    <property type="evidence" value="ECO:0000314"/>
    <property type="project" value="RGD"/>
</dbReference>
<dbReference type="GO" id="GO:0042391">
    <property type="term" value="P:regulation of membrane potential"/>
    <property type="evidence" value="ECO:0000266"/>
    <property type="project" value="RGD"/>
</dbReference>
<dbReference type="Gene3D" id="1.20.1070.10">
    <property type="entry name" value="Rhodopsin 7-helix transmembrane proteins"/>
    <property type="match status" value="1"/>
</dbReference>
<dbReference type="InterPro" id="IPR000276">
    <property type="entry name" value="GPCR_Rhodpsn"/>
</dbReference>
<dbReference type="InterPro" id="IPR017452">
    <property type="entry name" value="GPCR_Rhodpsn_7TM"/>
</dbReference>
<dbReference type="InterPro" id="IPR003986">
    <property type="entry name" value="NT2_rcpt"/>
</dbReference>
<dbReference type="InterPro" id="IPR003984">
    <property type="entry name" value="NT_rcpt"/>
</dbReference>
<dbReference type="PANTHER" id="PTHR24243">
    <property type="entry name" value="G-PROTEIN COUPLED RECEPTOR"/>
    <property type="match status" value="1"/>
</dbReference>
<dbReference type="PANTHER" id="PTHR24243:SF10">
    <property type="entry name" value="NEUROTENSIN RECEPTOR TYPE 2"/>
    <property type="match status" value="1"/>
</dbReference>
<dbReference type="Pfam" id="PF00001">
    <property type="entry name" value="7tm_1"/>
    <property type="match status" value="1"/>
</dbReference>
<dbReference type="PRINTS" id="PR00237">
    <property type="entry name" value="GPCRRHODOPSN"/>
</dbReference>
<dbReference type="PRINTS" id="PR01479">
    <property type="entry name" value="NEUROTENSINR"/>
</dbReference>
<dbReference type="PRINTS" id="PR01481">
    <property type="entry name" value="NEUROTENSN2R"/>
</dbReference>
<dbReference type="SUPFAM" id="SSF81321">
    <property type="entry name" value="Family A G protein-coupled receptor-like"/>
    <property type="match status" value="1"/>
</dbReference>
<dbReference type="PROSITE" id="PS00237">
    <property type="entry name" value="G_PROTEIN_RECEP_F1_1"/>
    <property type="match status" value="1"/>
</dbReference>
<dbReference type="PROSITE" id="PS50262">
    <property type="entry name" value="G_PROTEIN_RECEP_F1_2"/>
    <property type="match status" value="1"/>
</dbReference>
<keyword id="KW-1003">Cell membrane</keyword>
<keyword id="KW-1015">Disulfide bond</keyword>
<keyword id="KW-0297">G-protein coupled receptor</keyword>
<keyword id="KW-0449">Lipoprotein</keyword>
<keyword id="KW-0472">Membrane</keyword>
<keyword id="KW-0564">Palmitate</keyword>
<keyword id="KW-0597">Phosphoprotein</keyword>
<keyword id="KW-0675">Receptor</keyword>
<keyword id="KW-1185">Reference proteome</keyword>
<keyword id="KW-0807">Transducer</keyword>
<keyword id="KW-0812">Transmembrane</keyword>
<keyword id="KW-1133">Transmembrane helix</keyword>
<reference key="1">
    <citation type="journal article" date="1996" name="FEBS Lett.">
        <title>Molecular cloning of a levocabastine-sensitive neurotensin binding site.</title>
        <authorList>
            <person name="Chalon P."/>
            <person name="Vita N."/>
            <person name="Kaghad M."/>
            <person name="Guillemont M."/>
            <person name="Bonin J."/>
            <person name="Delpech B."/>
            <person name="le Fur G."/>
            <person name="Ferrara P."/>
            <person name="Caput D."/>
        </authorList>
    </citation>
    <scope>NUCLEOTIDE SEQUENCE [MRNA]</scope>
    <source>
        <tissue>Hypothalamus</tissue>
    </source>
</reference>
<reference key="2">
    <citation type="journal article" date="2012" name="Nat. Commun.">
        <title>Quantitative maps of protein phosphorylation sites across 14 different rat organs and tissues.</title>
        <authorList>
            <person name="Lundby A."/>
            <person name="Secher A."/>
            <person name="Lage K."/>
            <person name="Nordsborg N.B."/>
            <person name="Dmytriyev A."/>
            <person name="Lundby C."/>
            <person name="Olsen J.V."/>
        </authorList>
    </citation>
    <scope>PHOSPHORYLATION [LARGE SCALE ANALYSIS] AT SER-410</scope>
    <scope>IDENTIFICATION BY MASS SPECTROMETRY [LARGE SCALE ANALYSIS]</scope>
</reference>
<accession>Q63384</accession>
<feature type="chain" id="PRO_0000069951" description="Neurotensin receptor type 2">
    <location>
        <begin position="1"/>
        <end position="416"/>
    </location>
</feature>
<feature type="topological domain" description="Extracellular" evidence="1">
    <location>
        <begin position="1"/>
        <end position="32"/>
    </location>
</feature>
<feature type="transmembrane region" description="Helical; Name=1" evidence="1">
    <location>
        <begin position="33"/>
        <end position="55"/>
    </location>
</feature>
<feature type="topological domain" description="Cytoplasmic" evidence="1">
    <location>
        <begin position="56"/>
        <end position="64"/>
    </location>
</feature>
<feature type="transmembrane region" description="Helical; Name=2" evidence="1">
    <location>
        <begin position="65"/>
        <end position="87"/>
    </location>
</feature>
<feature type="topological domain" description="Extracellular" evidence="1">
    <location>
        <begin position="88"/>
        <end position="109"/>
    </location>
</feature>
<feature type="transmembrane region" description="Helical; Name=3" evidence="1">
    <location>
        <begin position="110"/>
        <end position="131"/>
    </location>
</feature>
<feature type="topological domain" description="Cytoplasmic" evidence="1">
    <location>
        <begin position="132"/>
        <end position="154"/>
    </location>
</feature>
<feature type="transmembrane region" description="Helical; Name=4" evidence="1">
    <location>
        <begin position="155"/>
        <end position="176"/>
    </location>
</feature>
<feature type="topological domain" description="Extracellular" evidence="1">
    <location>
        <begin position="177"/>
        <end position="216"/>
    </location>
</feature>
<feature type="transmembrane region" description="Helical; Name=5" evidence="1">
    <location>
        <begin position="217"/>
        <end position="237"/>
    </location>
</feature>
<feature type="topological domain" description="Cytoplasmic" evidence="1">
    <location>
        <begin position="238"/>
        <end position="297"/>
    </location>
</feature>
<feature type="transmembrane region" description="Helical; Name=6" evidence="1">
    <location>
        <begin position="298"/>
        <end position="318"/>
    </location>
</feature>
<feature type="topological domain" description="Extracellular" evidence="1">
    <location>
        <begin position="319"/>
        <end position="337"/>
    </location>
</feature>
<feature type="transmembrane region" description="Helical; Name=7" evidence="1">
    <location>
        <begin position="338"/>
        <end position="358"/>
    </location>
</feature>
<feature type="topological domain" description="Cytoplasmic" evidence="1">
    <location>
        <begin position="359"/>
        <end position="416"/>
    </location>
</feature>
<feature type="modified residue" description="Phosphoserine" evidence="3">
    <location>
        <position position="410"/>
    </location>
</feature>
<feature type="lipid moiety-binding region" description="S-palmitoyl cysteine" evidence="1">
    <location>
        <position position="377"/>
    </location>
</feature>
<feature type="disulfide bond" evidence="2">
    <location>
        <begin position="108"/>
        <end position="194"/>
    </location>
</feature>
<evidence type="ECO:0000255" key="1"/>
<evidence type="ECO:0000255" key="2">
    <source>
        <dbReference type="PROSITE-ProRule" id="PRU00521"/>
    </source>
</evidence>
<evidence type="ECO:0007744" key="3">
    <source>
    </source>
</evidence>
<comment type="function">
    <text>Receptor for the tridecapeptide neurotensin. It is associated with G proteins that activate a phosphatidylinositol-calcium second messenger system.</text>
</comment>
<comment type="subcellular location">
    <subcellularLocation>
        <location>Cell membrane</location>
        <topology>Multi-pass membrane protein</topology>
    </subcellularLocation>
</comment>
<comment type="tissue specificity">
    <text>Abundant in cortex and hypothalamus, and lower levels seen in the heart and intestine.</text>
</comment>
<comment type="developmental stage">
    <text>Expressed maximally in 7-day-old brain and expression decreases progressively until adulthood (35-day-old brain).</text>
</comment>
<comment type="similarity">
    <text evidence="2">Belongs to the G-protein coupled receptor 1 family. Neurotensin receptor subfamily. NTSR2 sub-subfamily.</text>
</comment>
<gene>
    <name type="primary">Ntsr2</name>
    <name type="synonym">Ntr2</name>
</gene>
<sequence>METSSPWPPRPSPSAGLSLEARLGVDTRLWAKVLFTALYSLIFAFGTAGNALSVHVVLKARAGRPGRLRYHVLSLALSALLLLLVSMPMELYNFVWSHYPWVFGDLGCRGYYFVRELCAYATVLSVASLSAERCLAVCQPLRARRLLTPRRTRRLLSLVWVASLGLALPMAVIMGQKHEVESADGEPEPASRVCTVLVSRATLQVFIQVNVLVSFALPLALTAFLNGITVNHLMALYSQVPSASAQVSSIPSRLELLSEEGLLGFITWRKTLSLGVQASLVRHKDASQIRSLQHSAQVLRAIVAVYVICWLPYHARRLMYCYIPDDGWTNELYDFYHYFYMVTNTLFYVSSAVTPILYNAVSSSFRKLFLESLGSLCGEQHSLVPLPQEAPESTTSTYSFRLWGSPRNPSLGEIQV</sequence>
<protein>
    <recommendedName>
        <fullName>Neurotensin receptor type 2</fullName>
        <shortName>NT-R-2</shortName>
        <shortName>NTR2</shortName>
    </recommendedName>
    <alternativeName>
        <fullName>High-affinity levocabastine-sensitive neurotensin receptor</fullName>
    </alternativeName>
</protein>
<proteinExistence type="evidence at protein level"/>
<organism>
    <name type="scientific">Rattus norvegicus</name>
    <name type="common">Rat</name>
    <dbReference type="NCBI Taxonomy" id="10116"/>
    <lineage>
        <taxon>Eukaryota</taxon>
        <taxon>Metazoa</taxon>
        <taxon>Chordata</taxon>
        <taxon>Craniata</taxon>
        <taxon>Vertebrata</taxon>
        <taxon>Euteleostomi</taxon>
        <taxon>Mammalia</taxon>
        <taxon>Eutheria</taxon>
        <taxon>Euarchontoglires</taxon>
        <taxon>Glires</taxon>
        <taxon>Rodentia</taxon>
        <taxon>Myomorpha</taxon>
        <taxon>Muroidea</taxon>
        <taxon>Muridae</taxon>
        <taxon>Murinae</taxon>
        <taxon>Rattus</taxon>
    </lineage>
</organism>
<name>NTR2_RAT</name>